<reference key="1">
    <citation type="journal article" date="2004" name="Nucleic Acids Res.">
        <title>Whole genome comparisons of serotype 4b and 1/2a strains of the food-borne pathogen Listeria monocytogenes reveal new insights into the core genome components of this species.</title>
        <authorList>
            <person name="Nelson K.E."/>
            <person name="Fouts D.E."/>
            <person name="Mongodin E.F."/>
            <person name="Ravel J."/>
            <person name="DeBoy R.T."/>
            <person name="Kolonay J.F."/>
            <person name="Rasko D.A."/>
            <person name="Angiuoli S.V."/>
            <person name="Gill S.R."/>
            <person name="Paulsen I.T."/>
            <person name="Peterson J.D."/>
            <person name="White O."/>
            <person name="Nelson W.C."/>
            <person name="Nierman W.C."/>
            <person name="Beanan M.J."/>
            <person name="Brinkac L.M."/>
            <person name="Daugherty S.C."/>
            <person name="Dodson R.J."/>
            <person name="Durkin A.S."/>
            <person name="Madupu R."/>
            <person name="Haft D.H."/>
            <person name="Selengut J."/>
            <person name="Van Aken S.E."/>
            <person name="Khouri H.M."/>
            <person name="Fedorova N."/>
            <person name="Forberger H.A."/>
            <person name="Tran B."/>
            <person name="Kathariou S."/>
            <person name="Wonderling L.D."/>
            <person name="Uhlich G.A."/>
            <person name="Bayles D.O."/>
            <person name="Luchansky J.B."/>
            <person name="Fraser C.M."/>
        </authorList>
    </citation>
    <scope>NUCLEOTIDE SEQUENCE [LARGE SCALE GENOMIC DNA]</scope>
    <source>
        <strain>F2365</strain>
    </source>
</reference>
<evidence type="ECO:0000255" key="1">
    <source>
        <dbReference type="HAMAP-Rule" id="MF_00008"/>
    </source>
</evidence>
<sequence length="314" mass="36177">MKQYLDLEKYVLENGTQKGDRTGTGTISTFGYQMRFDLQEGFPIMTTKRVPFKLVVSELLWFLHGDTNIRYLLQHNNNIWNEWAFERFVKSDDYKGEDMTDFGLRAERDSAFKEVYQAEMEKFKARILEDEAFANKYGELGNIYGKQWREWKTSQGETIDQLADLIEMIKTNPNSRRLIVSAWNPEDIPNMALPPCHSLFQFYVADGKLSCQLYQRSADIFLGVPFNIASYALLTHLIAREVGLEVGEFIHTMGDAHLYNNHIEQVKEQLSRTPHKLPKLVLSDKPATIFDFDVADISLDGYNPDPAIKAPISV</sequence>
<name>TYSY_LISMF</name>
<organism>
    <name type="scientific">Listeria monocytogenes serotype 4b (strain F2365)</name>
    <dbReference type="NCBI Taxonomy" id="265669"/>
    <lineage>
        <taxon>Bacteria</taxon>
        <taxon>Bacillati</taxon>
        <taxon>Bacillota</taxon>
        <taxon>Bacilli</taxon>
        <taxon>Bacillales</taxon>
        <taxon>Listeriaceae</taxon>
        <taxon>Listeria</taxon>
    </lineage>
</organism>
<dbReference type="EC" id="2.1.1.45" evidence="1"/>
<dbReference type="EMBL" id="AE017262">
    <property type="protein sequence ID" value="AAT04673.1"/>
    <property type="molecule type" value="Genomic_DNA"/>
</dbReference>
<dbReference type="RefSeq" id="WP_003725828.1">
    <property type="nucleotide sequence ID" value="NC_002973.6"/>
</dbReference>
<dbReference type="SMR" id="Q71YE1"/>
<dbReference type="KEGG" id="lmf:LMOf2365_1904"/>
<dbReference type="HOGENOM" id="CLU_021669_0_0_9"/>
<dbReference type="UniPathway" id="UPA00575"/>
<dbReference type="GO" id="GO:0005829">
    <property type="term" value="C:cytosol"/>
    <property type="evidence" value="ECO:0007669"/>
    <property type="project" value="TreeGrafter"/>
</dbReference>
<dbReference type="GO" id="GO:0004799">
    <property type="term" value="F:thymidylate synthase activity"/>
    <property type="evidence" value="ECO:0007669"/>
    <property type="project" value="UniProtKB-UniRule"/>
</dbReference>
<dbReference type="GO" id="GO:0006231">
    <property type="term" value="P:dTMP biosynthetic process"/>
    <property type="evidence" value="ECO:0007669"/>
    <property type="project" value="UniProtKB-UniRule"/>
</dbReference>
<dbReference type="GO" id="GO:0006235">
    <property type="term" value="P:dTTP biosynthetic process"/>
    <property type="evidence" value="ECO:0007669"/>
    <property type="project" value="UniProtKB-UniRule"/>
</dbReference>
<dbReference type="GO" id="GO:0032259">
    <property type="term" value="P:methylation"/>
    <property type="evidence" value="ECO:0007669"/>
    <property type="project" value="UniProtKB-KW"/>
</dbReference>
<dbReference type="CDD" id="cd00351">
    <property type="entry name" value="TS_Pyrimidine_HMase"/>
    <property type="match status" value="1"/>
</dbReference>
<dbReference type="Gene3D" id="3.30.572.10">
    <property type="entry name" value="Thymidylate synthase/dCMP hydroxymethylase domain"/>
    <property type="match status" value="1"/>
</dbReference>
<dbReference type="HAMAP" id="MF_00008">
    <property type="entry name" value="Thymidy_synth_bact"/>
    <property type="match status" value="1"/>
</dbReference>
<dbReference type="InterPro" id="IPR045097">
    <property type="entry name" value="Thymidate_synth/dCMP_Mease"/>
</dbReference>
<dbReference type="InterPro" id="IPR023451">
    <property type="entry name" value="Thymidate_synth/dCMP_Mease_dom"/>
</dbReference>
<dbReference type="InterPro" id="IPR036926">
    <property type="entry name" value="Thymidate_synth/dCMP_Mease_sf"/>
</dbReference>
<dbReference type="InterPro" id="IPR000398">
    <property type="entry name" value="Thymidylate_synthase"/>
</dbReference>
<dbReference type="InterPro" id="IPR020940">
    <property type="entry name" value="Thymidylate_synthase_AS"/>
</dbReference>
<dbReference type="NCBIfam" id="NF002496">
    <property type="entry name" value="PRK01827.1-2"/>
    <property type="match status" value="1"/>
</dbReference>
<dbReference type="NCBIfam" id="TIGR03284">
    <property type="entry name" value="thym_sym"/>
    <property type="match status" value="1"/>
</dbReference>
<dbReference type="PANTHER" id="PTHR11548:SF9">
    <property type="entry name" value="THYMIDYLATE SYNTHASE"/>
    <property type="match status" value="1"/>
</dbReference>
<dbReference type="PANTHER" id="PTHR11548">
    <property type="entry name" value="THYMIDYLATE SYNTHASE 1"/>
    <property type="match status" value="1"/>
</dbReference>
<dbReference type="Pfam" id="PF00303">
    <property type="entry name" value="Thymidylat_synt"/>
    <property type="match status" value="1"/>
</dbReference>
<dbReference type="PRINTS" id="PR00108">
    <property type="entry name" value="THYMDSNTHASE"/>
</dbReference>
<dbReference type="SUPFAM" id="SSF55831">
    <property type="entry name" value="Thymidylate synthase/dCMP hydroxymethylase"/>
    <property type="match status" value="1"/>
</dbReference>
<dbReference type="PROSITE" id="PS00091">
    <property type="entry name" value="THYMIDYLATE_SYNTHASE"/>
    <property type="match status" value="1"/>
</dbReference>
<proteinExistence type="inferred from homology"/>
<feature type="chain" id="PRO_0000140976" description="Thymidylate synthase">
    <location>
        <begin position="1"/>
        <end position="314"/>
    </location>
</feature>
<feature type="active site" description="Nucleophile" evidence="1">
    <location>
        <position position="196"/>
    </location>
</feature>
<feature type="binding site" description="in other chain" evidence="1">
    <location>
        <position position="21"/>
    </location>
    <ligand>
        <name>dUMP</name>
        <dbReference type="ChEBI" id="CHEBI:246422"/>
        <note>ligand shared between dimeric partners</note>
    </ligand>
</feature>
<feature type="binding site" evidence="1">
    <location>
        <begin position="176"/>
        <end position="177"/>
    </location>
    <ligand>
        <name>dUMP</name>
        <dbReference type="ChEBI" id="CHEBI:246422"/>
        <note>ligand shared between dimeric partners</note>
    </ligand>
</feature>
<feature type="binding site" description="in other chain" evidence="1">
    <location>
        <begin position="216"/>
        <end position="219"/>
    </location>
    <ligand>
        <name>dUMP</name>
        <dbReference type="ChEBI" id="CHEBI:246422"/>
        <note>ligand shared between dimeric partners</note>
    </ligand>
</feature>
<feature type="binding site" evidence="1">
    <location>
        <position position="219"/>
    </location>
    <ligand>
        <name>(6R)-5,10-methylene-5,6,7,8-tetrahydrofolate</name>
        <dbReference type="ChEBI" id="CHEBI:15636"/>
    </ligand>
</feature>
<feature type="binding site" description="in other chain" evidence="1">
    <location>
        <position position="227"/>
    </location>
    <ligand>
        <name>dUMP</name>
        <dbReference type="ChEBI" id="CHEBI:246422"/>
        <note>ligand shared between dimeric partners</note>
    </ligand>
</feature>
<feature type="binding site" description="in other chain" evidence="1">
    <location>
        <begin position="257"/>
        <end position="259"/>
    </location>
    <ligand>
        <name>dUMP</name>
        <dbReference type="ChEBI" id="CHEBI:246422"/>
        <note>ligand shared between dimeric partners</note>
    </ligand>
</feature>
<feature type="binding site" evidence="1">
    <location>
        <position position="313"/>
    </location>
    <ligand>
        <name>(6R)-5,10-methylene-5,6,7,8-tetrahydrofolate</name>
        <dbReference type="ChEBI" id="CHEBI:15636"/>
    </ligand>
</feature>
<gene>
    <name evidence="1" type="primary">thyA</name>
    <name type="ordered locus">LMOf2365_1904</name>
</gene>
<protein>
    <recommendedName>
        <fullName evidence="1">Thymidylate synthase</fullName>
        <shortName evidence="1">TS</shortName>
        <shortName evidence="1">TSase</shortName>
        <ecNumber evidence="1">2.1.1.45</ecNumber>
    </recommendedName>
</protein>
<comment type="function">
    <text evidence="1">Catalyzes the reductive methylation of 2'-deoxyuridine-5'-monophosphate (dUMP) to 2'-deoxythymidine-5'-monophosphate (dTMP) while utilizing 5,10-methylenetetrahydrofolate (mTHF) as the methyl donor and reductant in the reaction, yielding dihydrofolate (DHF) as a by-product. This enzymatic reaction provides an intracellular de novo source of dTMP, an essential precursor for DNA biosynthesis.</text>
</comment>
<comment type="catalytic activity">
    <reaction evidence="1">
        <text>dUMP + (6R)-5,10-methylene-5,6,7,8-tetrahydrofolate = 7,8-dihydrofolate + dTMP</text>
        <dbReference type="Rhea" id="RHEA:12104"/>
        <dbReference type="ChEBI" id="CHEBI:15636"/>
        <dbReference type="ChEBI" id="CHEBI:57451"/>
        <dbReference type="ChEBI" id="CHEBI:63528"/>
        <dbReference type="ChEBI" id="CHEBI:246422"/>
        <dbReference type="EC" id="2.1.1.45"/>
    </reaction>
</comment>
<comment type="pathway">
    <text evidence="1">Pyrimidine metabolism; dTTP biosynthesis.</text>
</comment>
<comment type="subunit">
    <text evidence="1">Homodimer.</text>
</comment>
<comment type="subcellular location">
    <subcellularLocation>
        <location evidence="1">Cytoplasm</location>
    </subcellularLocation>
</comment>
<comment type="similarity">
    <text evidence="1">Belongs to the thymidylate synthase family. Bacterial-type ThyA subfamily.</text>
</comment>
<accession>Q71YE1</accession>
<keyword id="KW-0963">Cytoplasm</keyword>
<keyword id="KW-0489">Methyltransferase</keyword>
<keyword id="KW-0545">Nucleotide biosynthesis</keyword>
<keyword id="KW-0808">Transferase</keyword>